<gene>
    <name evidence="1" type="primary">coq7</name>
    <name type="ordered locus">FTA_1042</name>
</gene>
<comment type="function">
    <text evidence="1">Catalyzes the hydroxylation of 2-nonaprenyl-3-methyl-6-methoxy-1,4-benzoquinol during ubiquinone biosynthesis.</text>
</comment>
<comment type="catalytic activity">
    <reaction evidence="1">
        <text>a 5-methoxy-2-methyl-3-(all-trans-polyprenyl)benzene-1,4-diol + AH2 + O2 = a 3-demethylubiquinol + A + H2O</text>
        <dbReference type="Rhea" id="RHEA:50908"/>
        <dbReference type="Rhea" id="RHEA-COMP:10859"/>
        <dbReference type="Rhea" id="RHEA-COMP:10914"/>
        <dbReference type="ChEBI" id="CHEBI:13193"/>
        <dbReference type="ChEBI" id="CHEBI:15377"/>
        <dbReference type="ChEBI" id="CHEBI:15379"/>
        <dbReference type="ChEBI" id="CHEBI:17499"/>
        <dbReference type="ChEBI" id="CHEBI:84167"/>
        <dbReference type="ChEBI" id="CHEBI:84422"/>
        <dbReference type="EC" id="1.14.99.60"/>
    </reaction>
</comment>
<comment type="cofactor">
    <cofactor evidence="1">
        <name>Fe cation</name>
        <dbReference type="ChEBI" id="CHEBI:24875"/>
    </cofactor>
    <text evidence="1">Binds 2 iron ions per subunit.</text>
</comment>
<comment type="pathway">
    <text evidence="1">Cofactor biosynthesis; ubiquinone biosynthesis.</text>
</comment>
<comment type="subcellular location">
    <subcellularLocation>
        <location evidence="1">Cell membrane</location>
        <topology evidence="1">Peripheral membrane protein</topology>
    </subcellularLocation>
</comment>
<comment type="similarity">
    <text evidence="1">Belongs to the COQ7 family.</text>
</comment>
<keyword id="KW-1003">Cell membrane</keyword>
<keyword id="KW-0408">Iron</keyword>
<keyword id="KW-0472">Membrane</keyword>
<keyword id="KW-0479">Metal-binding</keyword>
<keyword id="KW-0503">Monooxygenase</keyword>
<keyword id="KW-0560">Oxidoreductase</keyword>
<keyword id="KW-0831">Ubiquinone biosynthesis</keyword>
<sequence length="211" mass="23816">MRKLSFLDRVIEELDSYARFTKVPLNPSKKSPSSDTIDGKLFEIEKKHSAGLMRVDYTGEICAQGLYRGQASVAKSPQTKEHLYHAAAEEYDHLAWCGERLQELGARPSLLNPFWYWTSFGIGAVAGSISDSLSYGFVVETEKQVMKHIDSHLKSLPVNDNRSREILKQMYIDESEHAVEAEKAGGKKLPKTVKAIMKLQSKVMTTLAYRF</sequence>
<reference key="1">
    <citation type="journal article" date="2009" name="PLoS ONE">
        <title>Complete genome sequence of Francisella tularensis subspecies holarctica FTNF002-00.</title>
        <authorList>
            <person name="Barabote R.D."/>
            <person name="Xie G."/>
            <person name="Brettin T.S."/>
            <person name="Hinrichs S.H."/>
            <person name="Fey P.D."/>
            <person name="Jay J.J."/>
            <person name="Engle J.L."/>
            <person name="Godbole S.D."/>
            <person name="Noronha J.M."/>
            <person name="Scheuermann R.H."/>
            <person name="Zhou L.W."/>
            <person name="Lion C."/>
            <person name="Dempsey M.P."/>
        </authorList>
    </citation>
    <scope>NUCLEOTIDE SEQUENCE [LARGE SCALE GENOMIC DNA]</scope>
    <source>
        <strain>FTNF002-00 / FTA</strain>
    </source>
</reference>
<protein>
    <recommendedName>
        <fullName evidence="1">3-demethoxyubiquinol 3-hydroxylase</fullName>
        <shortName evidence="1">DMQ hydroxylase</shortName>
        <ecNumber evidence="1">1.14.99.60</ecNumber>
    </recommendedName>
    <alternativeName>
        <fullName evidence="1">2-nonaprenyl-3-methyl-6-methoxy-1,4-benzoquinol hydroxylase</fullName>
    </alternativeName>
</protein>
<feature type="chain" id="PRO_1000187051" description="3-demethoxyubiquinol 3-hydroxylase">
    <location>
        <begin position="1"/>
        <end position="211"/>
    </location>
</feature>
<feature type="binding site" evidence="1">
    <location>
        <position position="60"/>
    </location>
    <ligand>
        <name>Fe cation</name>
        <dbReference type="ChEBI" id="CHEBI:24875"/>
        <label>1</label>
    </ligand>
</feature>
<feature type="binding site" evidence="1">
    <location>
        <position position="90"/>
    </location>
    <ligand>
        <name>Fe cation</name>
        <dbReference type="ChEBI" id="CHEBI:24875"/>
        <label>1</label>
    </ligand>
</feature>
<feature type="binding site" evidence="1">
    <location>
        <position position="90"/>
    </location>
    <ligand>
        <name>Fe cation</name>
        <dbReference type="ChEBI" id="CHEBI:24875"/>
        <label>2</label>
    </ligand>
</feature>
<feature type="binding site" evidence="1">
    <location>
        <position position="93"/>
    </location>
    <ligand>
        <name>Fe cation</name>
        <dbReference type="ChEBI" id="CHEBI:24875"/>
        <label>1</label>
    </ligand>
</feature>
<feature type="binding site" evidence="1">
    <location>
        <position position="142"/>
    </location>
    <ligand>
        <name>Fe cation</name>
        <dbReference type="ChEBI" id="CHEBI:24875"/>
        <label>2</label>
    </ligand>
</feature>
<feature type="binding site" evidence="1">
    <location>
        <position position="174"/>
    </location>
    <ligand>
        <name>Fe cation</name>
        <dbReference type="ChEBI" id="CHEBI:24875"/>
        <label>1</label>
    </ligand>
</feature>
<feature type="binding site" evidence="1">
    <location>
        <position position="174"/>
    </location>
    <ligand>
        <name>Fe cation</name>
        <dbReference type="ChEBI" id="CHEBI:24875"/>
        <label>2</label>
    </ligand>
</feature>
<feature type="binding site" evidence="1">
    <location>
        <position position="177"/>
    </location>
    <ligand>
        <name>Fe cation</name>
        <dbReference type="ChEBI" id="CHEBI:24875"/>
        <label>2</label>
    </ligand>
</feature>
<accession>A7NC15</accession>
<organism>
    <name type="scientific">Francisella tularensis subsp. holarctica (strain FTNF002-00 / FTA)</name>
    <dbReference type="NCBI Taxonomy" id="458234"/>
    <lineage>
        <taxon>Bacteria</taxon>
        <taxon>Pseudomonadati</taxon>
        <taxon>Pseudomonadota</taxon>
        <taxon>Gammaproteobacteria</taxon>
        <taxon>Thiotrichales</taxon>
        <taxon>Francisellaceae</taxon>
        <taxon>Francisella</taxon>
    </lineage>
</organism>
<evidence type="ECO:0000255" key="1">
    <source>
        <dbReference type="HAMAP-Rule" id="MF_01658"/>
    </source>
</evidence>
<proteinExistence type="inferred from homology"/>
<dbReference type="EC" id="1.14.99.60" evidence="1"/>
<dbReference type="EMBL" id="CP000803">
    <property type="protein sequence ID" value="ABU61518.1"/>
    <property type="molecule type" value="Genomic_DNA"/>
</dbReference>
<dbReference type="RefSeq" id="WP_003015834.1">
    <property type="nucleotide sequence ID" value="NC_009749.1"/>
</dbReference>
<dbReference type="SMR" id="A7NC15"/>
<dbReference type="KEGG" id="fta:FTA_1042"/>
<dbReference type="HOGENOM" id="CLU_088601_0_0_6"/>
<dbReference type="UniPathway" id="UPA00232"/>
<dbReference type="GO" id="GO:0005886">
    <property type="term" value="C:plasma membrane"/>
    <property type="evidence" value="ECO:0007669"/>
    <property type="project" value="UniProtKB-SubCell"/>
</dbReference>
<dbReference type="GO" id="GO:0008682">
    <property type="term" value="F:3-demethoxyubiquinol 3-hydroxylase activity"/>
    <property type="evidence" value="ECO:0007669"/>
    <property type="project" value="UniProtKB-EC"/>
</dbReference>
<dbReference type="GO" id="GO:0046872">
    <property type="term" value="F:metal ion binding"/>
    <property type="evidence" value="ECO:0007669"/>
    <property type="project" value="UniProtKB-KW"/>
</dbReference>
<dbReference type="GO" id="GO:0006744">
    <property type="term" value="P:ubiquinone biosynthetic process"/>
    <property type="evidence" value="ECO:0007669"/>
    <property type="project" value="UniProtKB-UniRule"/>
</dbReference>
<dbReference type="CDD" id="cd01042">
    <property type="entry name" value="DMQH"/>
    <property type="match status" value="1"/>
</dbReference>
<dbReference type="Gene3D" id="1.20.1260.10">
    <property type="match status" value="1"/>
</dbReference>
<dbReference type="HAMAP" id="MF_01658">
    <property type="entry name" value="COQ7"/>
    <property type="match status" value="1"/>
</dbReference>
<dbReference type="InterPro" id="IPR047809">
    <property type="entry name" value="COQ7_proteobact"/>
</dbReference>
<dbReference type="InterPro" id="IPR012347">
    <property type="entry name" value="Ferritin-like"/>
</dbReference>
<dbReference type="InterPro" id="IPR009078">
    <property type="entry name" value="Ferritin-like_SF"/>
</dbReference>
<dbReference type="InterPro" id="IPR011566">
    <property type="entry name" value="Ubq_synth_Coq7"/>
</dbReference>
<dbReference type="NCBIfam" id="NF033656">
    <property type="entry name" value="DMQ_monoox_COQ7"/>
    <property type="match status" value="1"/>
</dbReference>
<dbReference type="PANTHER" id="PTHR11237:SF4">
    <property type="entry name" value="5-DEMETHOXYUBIQUINONE HYDROXYLASE, MITOCHONDRIAL"/>
    <property type="match status" value="1"/>
</dbReference>
<dbReference type="PANTHER" id="PTHR11237">
    <property type="entry name" value="COENZYME Q10 BIOSYNTHESIS PROTEIN 7"/>
    <property type="match status" value="1"/>
</dbReference>
<dbReference type="Pfam" id="PF03232">
    <property type="entry name" value="COQ7"/>
    <property type="match status" value="1"/>
</dbReference>
<dbReference type="SUPFAM" id="SSF47240">
    <property type="entry name" value="Ferritin-like"/>
    <property type="match status" value="1"/>
</dbReference>
<name>COQ7_FRATF</name>